<reference key="1">
    <citation type="journal article" date="2005" name="Proc. Natl. Acad. Sci. U.S.A.">
        <title>Comparison of the complete genome sequences of Pseudomonas syringae pv. syringae B728a and pv. tomato DC3000.</title>
        <authorList>
            <person name="Feil H."/>
            <person name="Feil W.S."/>
            <person name="Chain P."/>
            <person name="Larimer F."/>
            <person name="Dibartolo G."/>
            <person name="Copeland A."/>
            <person name="Lykidis A."/>
            <person name="Trong S."/>
            <person name="Nolan M."/>
            <person name="Goltsman E."/>
            <person name="Thiel J."/>
            <person name="Malfatti S."/>
            <person name="Loper J.E."/>
            <person name="Lapidus A."/>
            <person name="Detter J.C."/>
            <person name="Land M."/>
            <person name="Richardson P.M."/>
            <person name="Kyrpides N.C."/>
            <person name="Ivanova N."/>
            <person name="Lindow S.E."/>
        </authorList>
    </citation>
    <scope>NUCLEOTIDE SEQUENCE [LARGE SCALE GENOMIC DNA]</scope>
    <source>
        <strain>B728a</strain>
    </source>
</reference>
<feature type="chain" id="PRO_0000227077" description="Protein SlyX homolog">
    <location>
        <begin position="1"/>
        <end position="68"/>
    </location>
</feature>
<protein>
    <recommendedName>
        <fullName evidence="1">Protein SlyX homolog</fullName>
    </recommendedName>
</protein>
<sequence>MSLEERVMELESRMAFQDDTIQALNDVLVKQRRELDHLQLQMAAMLKRQEEMGSQFETFEEDAPPPHY</sequence>
<evidence type="ECO:0000255" key="1">
    <source>
        <dbReference type="HAMAP-Rule" id="MF_00715"/>
    </source>
</evidence>
<organism>
    <name type="scientific">Pseudomonas syringae pv. syringae (strain B728a)</name>
    <dbReference type="NCBI Taxonomy" id="205918"/>
    <lineage>
        <taxon>Bacteria</taxon>
        <taxon>Pseudomonadati</taxon>
        <taxon>Pseudomonadota</taxon>
        <taxon>Gammaproteobacteria</taxon>
        <taxon>Pseudomonadales</taxon>
        <taxon>Pseudomonadaceae</taxon>
        <taxon>Pseudomonas</taxon>
        <taxon>Pseudomonas syringae</taxon>
    </lineage>
</organism>
<dbReference type="EMBL" id="CP000075">
    <property type="protein sequence ID" value="AAY36453.1"/>
    <property type="molecule type" value="Genomic_DNA"/>
</dbReference>
<dbReference type="RefSeq" id="WP_003364741.1">
    <property type="nucleotide sequence ID" value="NC_007005.1"/>
</dbReference>
<dbReference type="RefSeq" id="YP_234491.1">
    <property type="nucleotide sequence ID" value="NC_007005.1"/>
</dbReference>
<dbReference type="SMR" id="Q4ZWL9"/>
<dbReference type="STRING" id="205918.Psyr_1402"/>
<dbReference type="KEGG" id="psb:Psyr_1402"/>
<dbReference type="PATRIC" id="fig|205918.7.peg.1437"/>
<dbReference type="eggNOG" id="COG2900">
    <property type="taxonomic scope" value="Bacteria"/>
</dbReference>
<dbReference type="HOGENOM" id="CLU_180796_4_1_6"/>
<dbReference type="OrthoDB" id="8606883at2"/>
<dbReference type="Proteomes" id="UP000000426">
    <property type="component" value="Chromosome"/>
</dbReference>
<dbReference type="Gene3D" id="1.20.5.300">
    <property type="match status" value="1"/>
</dbReference>
<dbReference type="HAMAP" id="MF_00715">
    <property type="entry name" value="SlyX"/>
    <property type="match status" value="1"/>
</dbReference>
<dbReference type="InterPro" id="IPR007236">
    <property type="entry name" value="SlyX"/>
</dbReference>
<dbReference type="NCBIfam" id="NF001421">
    <property type="entry name" value="PRK00295.1"/>
    <property type="match status" value="1"/>
</dbReference>
<dbReference type="PANTHER" id="PTHR36508">
    <property type="entry name" value="PROTEIN SLYX"/>
    <property type="match status" value="1"/>
</dbReference>
<dbReference type="PANTHER" id="PTHR36508:SF1">
    <property type="entry name" value="PROTEIN SLYX"/>
    <property type="match status" value="1"/>
</dbReference>
<dbReference type="Pfam" id="PF04102">
    <property type="entry name" value="SlyX"/>
    <property type="match status" value="1"/>
</dbReference>
<accession>Q4ZWL9</accession>
<comment type="similarity">
    <text evidence="1">Belongs to the SlyX family.</text>
</comment>
<proteinExistence type="inferred from homology"/>
<gene>
    <name evidence="1" type="primary">slyX</name>
    <name type="ordered locus">Psyr_1402</name>
</gene>
<name>SLYX_PSEU2</name>